<feature type="chain" id="PRO_0000354455" description="Large ribosomal subunit protein uL22">
    <location>
        <begin position="1"/>
        <end position="111"/>
    </location>
</feature>
<name>RL22_CHLTB</name>
<dbReference type="EMBL" id="AM884177">
    <property type="protein sequence ID" value="CAP07177.1"/>
    <property type="molecule type" value="Genomic_DNA"/>
</dbReference>
<dbReference type="RefSeq" id="WP_012263663.1">
    <property type="nucleotide sequence ID" value="NC_010280.2"/>
</dbReference>
<dbReference type="SMR" id="B0BCG2"/>
<dbReference type="KEGG" id="ctl:CTLon_0780"/>
<dbReference type="HOGENOM" id="CLU_083987_3_3_0"/>
<dbReference type="Proteomes" id="UP001154401">
    <property type="component" value="Chromosome"/>
</dbReference>
<dbReference type="GO" id="GO:0022625">
    <property type="term" value="C:cytosolic large ribosomal subunit"/>
    <property type="evidence" value="ECO:0007669"/>
    <property type="project" value="TreeGrafter"/>
</dbReference>
<dbReference type="GO" id="GO:0019843">
    <property type="term" value="F:rRNA binding"/>
    <property type="evidence" value="ECO:0007669"/>
    <property type="project" value="UniProtKB-UniRule"/>
</dbReference>
<dbReference type="GO" id="GO:0003735">
    <property type="term" value="F:structural constituent of ribosome"/>
    <property type="evidence" value="ECO:0007669"/>
    <property type="project" value="InterPro"/>
</dbReference>
<dbReference type="GO" id="GO:0006412">
    <property type="term" value="P:translation"/>
    <property type="evidence" value="ECO:0007669"/>
    <property type="project" value="UniProtKB-UniRule"/>
</dbReference>
<dbReference type="FunFam" id="3.90.470.10:FF:000025">
    <property type="entry name" value="50S ribosomal protein L22"/>
    <property type="match status" value="1"/>
</dbReference>
<dbReference type="Gene3D" id="3.90.470.10">
    <property type="entry name" value="Ribosomal protein L22/L17"/>
    <property type="match status" value="1"/>
</dbReference>
<dbReference type="HAMAP" id="MF_01331_B">
    <property type="entry name" value="Ribosomal_uL22_B"/>
    <property type="match status" value="1"/>
</dbReference>
<dbReference type="InterPro" id="IPR001063">
    <property type="entry name" value="Ribosomal_uL22"/>
</dbReference>
<dbReference type="InterPro" id="IPR005727">
    <property type="entry name" value="Ribosomal_uL22_bac/chlpt-type"/>
</dbReference>
<dbReference type="InterPro" id="IPR047867">
    <property type="entry name" value="Ribosomal_uL22_bac/org-type"/>
</dbReference>
<dbReference type="InterPro" id="IPR036394">
    <property type="entry name" value="Ribosomal_uL22_sf"/>
</dbReference>
<dbReference type="NCBIfam" id="TIGR01044">
    <property type="entry name" value="rplV_bact"/>
    <property type="match status" value="1"/>
</dbReference>
<dbReference type="PANTHER" id="PTHR13501">
    <property type="entry name" value="CHLOROPLAST 50S RIBOSOMAL PROTEIN L22-RELATED"/>
    <property type="match status" value="1"/>
</dbReference>
<dbReference type="PANTHER" id="PTHR13501:SF8">
    <property type="entry name" value="LARGE RIBOSOMAL SUBUNIT PROTEIN UL22M"/>
    <property type="match status" value="1"/>
</dbReference>
<dbReference type="Pfam" id="PF00237">
    <property type="entry name" value="Ribosomal_L22"/>
    <property type="match status" value="1"/>
</dbReference>
<dbReference type="SUPFAM" id="SSF54843">
    <property type="entry name" value="Ribosomal protein L22"/>
    <property type="match status" value="1"/>
</dbReference>
<reference key="1">
    <citation type="journal article" date="2008" name="Genome Res.">
        <title>Chlamydia trachomatis: genome sequence analysis of lymphogranuloma venereum isolates.</title>
        <authorList>
            <person name="Thomson N.R."/>
            <person name="Holden M.T.G."/>
            <person name="Carder C."/>
            <person name="Lennard N."/>
            <person name="Lockey S.J."/>
            <person name="Marsh P."/>
            <person name="Skipp P."/>
            <person name="O'Connor C.D."/>
            <person name="Goodhead I."/>
            <person name="Norbertzcak H."/>
            <person name="Harris B."/>
            <person name="Ormond D."/>
            <person name="Rance R."/>
            <person name="Quail M.A."/>
            <person name="Parkhill J."/>
            <person name="Stephens R.S."/>
            <person name="Clarke I.N."/>
        </authorList>
    </citation>
    <scope>NUCLEOTIDE SEQUENCE [LARGE SCALE GENOMIC DNA]</scope>
    <source>
        <strain>UCH-1/proctitis</strain>
    </source>
</reference>
<proteinExistence type="inferred from homology"/>
<evidence type="ECO:0000255" key="1">
    <source>
        <dbReference type="HAMAP-Rule" id="MF_01331"/>
    </source>
</evidence>
<evidence type="ECO:0000305" key="2"/>
<accession>B0BCG2</accession>
<comment type="function">
    <text evidence="1">This protein binds specifically to 23S rRNA; its binding is stimulated by other ribosomal proteins, e.g. L4, L17, and L20. It is important during the early stages of 50S assembly. It makes multiple contacts with different domains of the 23S rRNA in the assembled 50S subunit and ribosome (By similarity).</text>
</comment>
<comment type="function">
    <text evidence="1">The globular domain of the protein is located near the polypeptide exit tunnel on the outside of the subunit, while an extended beta-hairpin is found that lines the wall of the exit tunnel in the center of the 70S ribosome.</text>
</comment>
<comment type="subunit">
    <text evidence="1">Part of the 50S ribosomal subunit.</text>
</comment>
<comment type="similarity">
    <text evidence="1">Belongs to the universal ribosomal protein uL22 family.</text>
</comment>
<keyword id="KW-0687">Ribonucleoprotein</keyword>
<keyword id="KW-0689">Ribosomal protein</keyword>
<keyword id="KW-0694">RNA-binding</keyword>
<keyword id="KW-0699">rRNA-binding</keyword>
<protein>
    <recommendedName>
        <fullName evidence="1">Large ribosomal subunit protein uL22</fullName>
    </recommendedName>
    <alternativeName>
        <fullName evidence="2">50S ribosomal protein L22</fullName>
    </alternativeName>
</protein>
<sequence length="111" mass="12469">MFKATARYIRVQPRKARLAAGLMRNRSVVEAQQQLSFSQMKAGRCLKKVLDSAIANAESNENIKRENLCILEVRVDAGPMFKRMKSKSRGGRAPILKRTSHLTVIVGERGQ</sequence>
<gene>
    <name evidence="1" type="primary">rplV</name>
    <name type="ordered locus">CTLon_0780</name>
</gene>
<organism>
    <name type="scientific">Chlamydia trachomatis serovar L2b (strain UCH-1/proctitis)</name>
    <dbReference type="NCBI Taxonomy" id="471473"/>
    <lineage>
        <taxon>Bacteria</taxon>
        <taxon>Pseudomonadati</taxon>
        <taxon>Chlamydiota</taxon>
        <taxon>Chlamydiia</taxon>
        <taxon>Chlamydiales</taxon>
        <taxon>Chlamydiaceae</taxon>
        <taxon>Chlamydia/Chlamydophila group</taxon>
        <taxon>Chlamydia</taxon>
    </lineage>
</organism>